<organism>
    <name type="scientific">Mus musculus</name>
    <name type="common">Mouse</name>
    <dbReference type="NCBI Taxonomy" id="10090"/>
    <lineage>
        <taxon>Eukaryota</taxon>
        <taxon>Metazoa</taxon>
        <taxon>Chordata</taxon>
        <taxon>Craniata</taxon>
        <taxon>Vertebrata</taxon>
        <taxon>Euteleostomi</taxon>
        <taxon>Mammalia</taxon>
        <taxon>Eutheria</taxon>
        <taxon>Euarchontoglires</taxon>
        <taxon>Glires</taxon>
        <taxon>Rodentia</taxon>
        <taxon>Myomorpha</taxon>
        <taxon>Muroidea</taxon>
        <taxon>Muridae</taxon>
        <taxon>Murinae</taxon>
        <taxon>Mus</taxon>
        <taxon>Mus</taxon>
    </lineage>
</organism>
<dbReference type="EMBL" id="AC136146">
    <property type="status" value="NOT_ANNOTATED_CDS"/>
    <property type="molecule type" value="Genomic_DNA"/>
</dbReference>
<dbReference type="EMBL" id="BC027193">
    <property type="protein sequence ID" value="AAH27193.1"/>
    <property type="status" value="ALT_INIT"/>
    <property type="molecule type" value="mRNA"/>
</dbReference>
<dbReference type="EMBL" id="AK037952">
    <property type="status" value="NOT_ANNOTATED_CDS"/>
    <property type="molecule type" value="mRNA"/>
</dbReference>
<dbReference type="RefSeq" id="NP_034313.1">
    <property type="nucleotide sequence ID" value="NM_010183.1"/>
</dbReference>
<dbReference type="FunCoup" id="Q8R089">
    <property type="interactions" value="122"/>
</dbReference>
<dbReference type="STRING" id="10090.ENSMUSP00000043682"/>
<dbReference type="GlyGen" id="Q8R089">
    <property type="glycosylation" value="2 sites"/>
</dbReference>
<dbReference type="iPTMnet" id="Q8R089"/>
<dbReference type="PhosphoSitePlus" id="Q8R089"/>
<dbReference type="jPOST" id="Q8R089"/>
<dbReference type="PaxDb" id="10090-ENSMUSP00000043682"/>
<dbReference type="ProteomicsDB" id="271878"/>
<dbReference type="Antibodypedia" id="43660">
    <property type="antibodies" value="74 antibodies from 15 providers"/>
</dbReference>
<dbReference type="Ensembl" id="ENSMUST00000048896.8">
    <property type="protein sequence ID" value="ENSMUSP00000043682.7"/>
    <property type="gene ID" value="ENSMUSG00000042423.10"/>
</dbReference>
<dbReference type="GeneID" id="14123"/>
<dbReference type="KEGG" id="mmu:14123"/>
<dbReference type="UCSC" id="uc009jvs.2">
    <property type="organism name" value="mouse"/>
</dbReference>
<dbReference type="AGR" id="MGI:104648"/>
<dbReference type="CTD" id="64319"/>
<dbReference type="MGI" id="MGI:104648">
    <property type="gene designation" value="Fbrs"/>
</dbReference>
<dbReference type="VEuPathDB" id="HostDB:ENSMUSG00000042423"/>
<dbReference type="eggNOG" id="ENOG502QT69">
    <property type="taxonomic scope" value="Eukaryota"/>
</dbReference>
<dbReference type="GeneTree" id="ENSGT00940000161032"/>
<dbReference type="HOGENOM" id="CLU_049409_0_0_1"/>
<dbReference type="InParanoid" id="Q8R089"/>
<dbReference type="PhylomeDB" id="Q8R089"/>
<dbReference type="TreeFam" id="TF331929"/>
<dbReference type="BioGRID-ORCS" id="14123">
    <property type="hits" value="6 hits in 77 CRISPR screens"/>
</dbReference>
<dbReference type="ChiTaRS" id="Fbrs">
    <property type="organism name" value="mouse"/>
</dbReference>
<dbReference type="PRO" id="PR:Q8R089"/>
<dbReference type="Proteomes" id="UP000000589">
    <property type="component" value="Chromosome 7"/>
</dbReference>
<dbReference type="RNAct" id="Q8R089">
    <property type="molecule type" value="protein"/>
</dbReference>
<dbReference type="Bgee" id="ENSMUSG00000042423">
    <property type="expression patterns" value="Expressed in granulocyte and 62 other cell types or tissues"/>
</dbReference>
<dbReference type="ExpressionAtlas" id="Q8R089">
    <property type="expression patterns" value="baseline and differential"/>
</dbReference>
<dbReference type="GO" id="GO:0005615">
    <property type="term" value="C:extracellular space"/>
    <property type="evidence" value="ECO:0000314"/>
    <property type="project" value="MGI"/>
</dbReference>
<dbReference type="GO" id="GO:0008083">
    <property type="term" value="F:growth factor activity"/>
    <property type="evidence" value="ECO:0000314"/>
    <property type="project" value="MGI"/>
</dbReference>
<dbReference type="GO" id="GO:0048146">
    <property type="term" value="P:positive regulation of fibroblast proliferation"/>
    <property type="evidence" value="ECO:0000314"/>
    <property type="project" value="MGI"/>
</dbReference>
<dbReference type="InterPro" id="IPR023246">
    <property type="entry name" value="AUTS2"/>
</dbReference>
<dbReference type="PANTHER" id="PTHR14429:SF24">
    <property type="entry name" value="FIBROSIN"/>
    <property type="match status" value="1"/>
</dbReference>
<dbReference type="PANTHER" id="PTHR14429">
    <property type="entry name" value="FIBROSIN FAMILY MEMBER"/>
    <property type="match status" value="1"/>
</dbReference>
<dbReference type="Pfam" id="PF15336">
    <property type="entry name" value="Auts2"/>
    <property type="match status" value="1"/>
</dbReference>
<dbReference type="PRINTS" id="PR02044">
    <property type="entry name" value="FIBROSIN1LPF"/>
</dbReference>
<protein>
    <recommendedName>
        <fullName>Probable fibrosin-1</fullName>
    </recommendedName>
</protein>
<name>FBRS_MOUSE</name>
<sequence>MFEKYPGKMEGLFRHNPYMAFPPAVPGLPPGLPPAVSFGSLQGAFQPKNTNPELPPRLGPVLSGLPQKGTQIPDHFRPPLRKPGKWCAMHVRVAYMILRHQEKMKGDSHKLDFRNDLLPCLPGPYGALPPGQELSHPASLFTATGAVHAAANPFTTAPGAHGPFLSPSTHIDPFGRPTSFASLAALSNGAFGGLGSPTFNSSAVFAQKESPGAPPAFASPPDPWGRLHRSPLAFPAWVRPPETARTPGSDKERPMERREPSVTKEEKDRDLPFSRPQLRVSPATPKARAGEEGARPAKESVRVKEERKEEAAAAAAAAAAAAAAAAAAAAAAAATTGPQGLHLLLERPRPPPFLGPSLPERCAGFPEPTWLAGPPRLARPPRFYEAGEELTGPGAMAAARLYSLDPAHPLLYSRLAPPPPPTATPGTPHLLSKTPPGALLGAPPPLVPAPRPSSPPRAPGPARADR</sequence>
<accession>Q8R089</accession>
<gene>
    <name type="primary">Fbrs</name>
    <name type="synonym">Fbs</name>
    <name type="synonym">Fbs1</name>
</gene>
<feature type="chain" id="PRO_0000087207" description="Probable fibrosin-1">
    <location>
        <begin position="1"/>
        <end position="466"/>
    </location>
</feature>
<feature type="region of interest" description="Disordered" evidence="2">
    <location>
        <begin position="236"/>
        <end position="315"/>
    </location>
</feature>
<feature type="region of interest" description="Disordered" evidence="2">
    <location>
        <begin position="410"/>
        <end position="466"/>
    </location>
</feature>
<feature type="compositionally biased region" description="Basic and acidic residues" evidence="2">
    <location>
        <begin position="248"/>
        <end position="272"/>
    </location>
</feature>
<feature type="compositionally biased region" description="Basic and acidic residues" evidence="2">
    <location>
        <begin position="288"/>
        <end position="311"/>
    </location>
</feature>
<feature type="compositionally biased region" description="Pro residues" evidence="2">
    <location>
        <begin position="442"/>
        <end position="459"/>
    </location>
</feature>
<feature type="modified residue" description="Asymmetric dimethylarginine" evidence="5">
    <location>
        <position position="229"/>
    </location>
</feature>
<feature type="modified residue" description="Asymmetric dimethylarginine" evidence="1">
    <location>
        <position position="239"/>
    </location>
</feature>
<feature type="modified residue" description="Phosphoserine" evidence="1">
    <location>
        <position position="281"/>
    </location>
</feature>
<feature type="cross-link" description="Glycyl lysine isopeptide (Lys-Gly) (interchain with G-Cter in SUMO2)" evidence="1">
    <location>
        <position position="8"/>
    </location>
</feature>
<feature type="sequence conflict" description="In Ref. 3; AK037952." evidence="3" ref="3">
    <original>A</original>
    <variation>T</variation>
    <location>
        <position position="283"/>
    </location>
</feature>
<evidence type="ECO:0000250" key="1">
    <source>
        <dbReference type="UniProtKB" id="Q9HAH7"/>
    </source>
</evidence>
<evidence type="ECO:0000256" key="2">
    <source>
        <dbReference type="SAM" id="MobiDB-lite"/>
    </source>
</evidence>
<evidence type="ECO:0000305" key="3"/>
<evidence type="ECO:0000305" key="4">
    <source>
    </source>
</evidence>
<evidence type="ECO:0007744" key="5">
    <source>
    </source>
</evidence>
<keyword id="KW-1017">Isopeptide bond</keyword>
<keyword id="KW-0488">Methylation</keyword>
<keyword id="KW-0597">Phosphoprotein</keyword>
<keyword id="KW-1185">Reference proteome</keyword>
<keyword id="KW-0832">Ubl conjugation</keyword>
<comment type="caution">
    <text evidence="4">Prakash et al. cloned a partial cDNA corresponding to the 3'UTR of the last exon of the gene (PubMed:7892239). They have shown that a synthetic peptide derived from this sequence could stimulate fibroblasts growth in vitro, and that this protein could be a fibrogenic lymphokine, that could stimulate several biological activities related to scarring. It would be expressed several cell types including CD4+ lymphocytes and fibroblasts. However, it was not confirmed by in vivo data.</text>
</comment>
<comment type="sequence caution" evidence="3">
    <conflict type="erroneous initiation">
        <sequence resource="EMBL-CDS" id="AAH27193"/>
    </conflict>
    <text>Truncated N-terminus.</text>
</comment>
<comment type="sequence caution" evidence="3">
    <conflict type="frameshift">
        <sequence resource="EMBL" id="AK037952"/>
    </conflict>
</comment>
<comment type="sequence caution" evidence="3">
    <conflict type="miscellaneous discrepancy">
        <sequence resource="EMBL" id="AK037952"/>
    </conflict>
    <text>Contaminating sequence. Sequence of unknown origin in the N-terminal part.</text>
</comment>
<proteinExistence type="evidence at protein level"/>
<reference key="1">
    <citation type="journal article" date="2009" name="PLoS Biol.">
        <title>Lineage-specific biology revealed by a finished genome assembly of the mouse.</title>
        <authorList>
            <person name="Church D.M."/>
            <person name="Goodstadt L."/>
            <person name="Hillier L.W."/>
            <person name="Zody M.C."/>
            <person name="Goldstein S."/>
            <person name="She X."/>
            <person name="Bult C.J."/>
            <person name="Agarwala R."/>
            <person name="Cherry J.L."/>
            <person name="DiCuccio M."/>
            <person name="Hlavina W."/>
            <person name="Kapustin Y."/>
            <person name="Meric P."/>
            <person name="Maglott D."/>
            <person name="Birtle Z."/>
            <person name="Marques A.C."/>
            <person name="Graves T."/>
            <person name="Zhou S."/>
            <person name="Teague B."/>
            <person name="Potamousis K."/>
            <person name="Churas C."/>
            <person name="Place M."/>
            <person name="Herschleb J."/>
            <person name="Runnheim R."/>
            <person name="Forrest D."/>
            <person name="Amos-Landgraf J."/>
            <person name="Schwartz D.C."/>
            <person name="Cheng Z."/>
            <person name="Lindblad-Toh K."/>
            <person name="Eichler E.E."/>
            <person name="Ponting C.P."/>
        </authorList>
    </citation>
    <scope>NUCLEOTIDE SEQUENCE [LARGE SCALE GENOMIC DNA]</scope>
    <source>
        <strain>C57BL/6J</strain>
    </source>
</reference>
<reference key="2">
    <citation type="journal article" date="2004" name="Genome Res.">
        <title>The status, quality, and expansion of the NIH full-length cDNA project: the Mammalian Gene Collection (MGC).</title>
        <authorList>
            <consortium name="The MGC Project Team"/>
        </authorList>
    </citation>
    <scope>NUCLEOTIDE SEQUENCE [LARGE SCALE MRNA] OF 38-466</scope>
    <source>
        <tissue>Colon</tissue>
    </source>
</reference>
<reference key="3">
    <citation type="journal article" date="2005" name="Science">
        <title>The transcriptional landscape of the mammalian genome.</title>
        <authorList>
            <person name="Carninci P."/>
            <person name="Kasukawa T."/>
            <person name="Katayama S."/>
            <person name="Gough J."/>
            <person name="Frith M.C."/>
            <person name="Maeda N."/>
            <person name="Oyama R."/>
            <person name="Ravasi T."/>
            <person name="Lenhard B."/>
            <person name="Wells C."/>
            <person name="Kodzius R."/>
            <person name="Shimokawa K."/>
            <person name="Bajic V.B."/>
            <person name="Brenner S.E."/>
            <person name="Batalov S."/>
            <person name="Forrest A.R."/>
            <person name="Zavolan M."/>
            <person name="Davis M.J."/>
            <person name="Wilming L.G."/>
            <person name="Aidinis V."/>
            <person name="Allen J.E."/>
            <person name="Ambesi-Impiombato A."/>
            <person name="Apweiler R."/>
            <person name="Aturaliya R.N."/>
            <person name="Bailey T.L."/>
            <person name="Bansal M."/>
            <person name="Baxter L."/>
            <person name="Beisel K.W."/>
            <person name="Bersano T."/>
            <person name="Bono H."/>
            <person name="Chalk A.M."/>
            <person name="Chiu K.P."/>
            <person name="Choudhary V."/>
            <person name="Christoffels A."/>
            <person name="Clutterbuck D.R."/>
            <person name="Crowe M.L."/>
            <person name="Dalla E."/>
            <person name="Dalrymple B.P."/>
            <person name="de Bono B."/>
            <person name="Della Gatta G."/>
            <person name="di Bernardo D."/>
            <person name="Down T."/>
            <person name="Engstrom P."/>
            <person name="Fagiolini M."/>
            <person name="Faulkner G."/>
            <person name="Fletcher C.F."/>
            <person name="Fukushima T."/>
            <person name="Furuno M."/>
            <person name="Futaki S."/>
            <person name="Gariboldi M."/>
            <person name="Georgii-Hemming P."/>
            <person name="Gingeras T.R."/>
            <person name="Gojobori T."/>
            <person name="Green R.E."/>
            <person name="Gustincich S."/>
            <person name="Harbers M."/>
            <person name="Hayashi Y."/>
            <person name="Hensch T.K."/>
            <person name="Hirokawa N."/>
            <person name="Hill D."/>
            <person name="Huminiecki L."/>
            <person name="Iacono M."/>
            <person name="Ikeo K."/>
            <person name="Iwama A."/>
            <person name="Ishikawa T."/>
            <person name="Jakt M."/>
            <person name="Kanapin A."/>
            <person name="Katoh M."/>
            <person name="Kawasawa Y."/>
            <person name="Kelso J."/>
            <person name="Kitamura H."/>
            <person name="Kitano H."/>
            <person name="Kollias G."/>
            <person name="Krishnan S.P."/>
            <person name="Kruger A."/>
            <person name="Kummerfeld S.K."/>
            <person name="Kurochkin I.V."/>
            <person name="Lareau L.F."/>
            <person name="Lazarevic D."/>
            <person name="Lipovich L."/>
            <person name="Liu J."/>
            <person name="Liuni S."/>
            <person name="McWilliam S."/>
            <person name="Madan Babu M."/>
            <person name="Madera M."/>
            <person name="Marchionni L."/>
            <person name="Matsuda H."/>
            <person name="Matsuzawa S."/>
            <person name="Miki H."/>
            <person name="Mignone F."/>
            <person name="Miyake S."/>
            <person name="Morris K."/>
            <person name="Mottagui-Tabar S."/>
            <person name="Mulder N."/>
            <person name="Nakano N."/>
            <person name="Nakauchi H."/>
            <person name="Ng P."/>
            <person name="Nilsson R."/>
            <person name="Nishiguchi S."/>
            <person name="Nishikawa S."/>
            <person name="Nori F."/>
            <person name="Ohara O."/>
            <person name="Okazaki Y."/>
            <person name="Orlando V."/>
            <person name="Pang K.C."/>
            <person name="Pavan W.J."/>
            <person name="Pavesi G."/>
            <person name="Pesole G."/>
            <person name="Petrovsky N."/>
            <person name="Piazza S."/>
            <person name="Reed J."/>
            <person name="Reid J.F."/>
            <person name="Ring B.Z."/>
            <person name="Ringwald M."/>
            <person name="Rost B."/>
            <person name="Ruan Y."/>
            <person name="Salzberg S.L."/>
            <person name="Sandelin A."/>
            <person name="Schneider C."/>
            <person name="Schoenbach C."/>
            <person name="Sekiguchi K."/>
            <person name="Semple C.A."/>
            <person name="Seno S."/>
            <person name="Sessa L."/>
            <person name="Sheng Y."/>
            <person name="Shibata Y."/>
            <person name="Shimada H."/>
            <person name="Shimada K."/>
            <person name="Silva D."/>
            <person name="Sinclair B."/>
            <person name="Sperling S."/>
            <person name="Stupka E."/>
            <person name="Sugiura K."/>
            <person name="Sultana R."/>
            <person name="Takenaka Y."/>
            <person name="Taki K."/>
            <person name="Tammoja K."/>
            <person name="Tan S.L."/>
            <person name="Tang S."/>
            <person name="Taylor M.S."/>
            <person name="Tegner J."/>
            <person name="Teichmann S.A."/>
            <person name="Ueda H.R."/>
            <person name="van Nimwegen E."/>
            <person name="Verardo R."/>
            <person name="Wei C.L."/>
            <person name="Yagi K."/>
            <person name="Yamanishi H."/>
            <person name="Zabarovsky E."/>
            <person name="Zhu S."/>
            <person name="Zimmer A."/>
            <person name="Hide W."/>
            <person name="Bult C."/>
            <person name="Grimmond S.M."/>
            <person name="Teasdale R.D."/>
            <person name="Liu E.T."/>
            <person name="Brusic V."/>
            <person name="Quackenbush J."/>
            <person name="Wahlestedt C."/>
            <person name="Mattick J.S."/>
            <person name="Hume D.A."/>
            <person name="Kai C."/>
            <person name="Sasaki D."/>
            <person name="Tomaru Y."/>
            <person name="Fukuda S."/>
            <person name="Kanamori-Katayama M."/>
            <person name="Suzuki M."/>
            <person name="Aoki J."/>
            <person name="Arakawa T."/>
            <person name="Iida J."/>
            <person name="Imamura K."/>
            <person name="Itoh M."/>
            <person name="Kato T."/>
            <person name="Kawaji H."/>
            <person name="Kawagashira N."/>
            <person name="Kawashima T."/>
            <person name="Kojima M."/>
            <person name="Kondo S."/>
            <person name="Konno H."/>
            <person name="Nakano K."/>
            <person name="Ninomiya N."/>
            <person name="Nishio T."/>
            <person name="Okada M."/>
            <person name="Plessy C."/>
            <person name="Shibata K."/>
            <person name="Shiraki T."/>
            <person name="Suzuki S."/>
            <person name="Tagami M."/>
            <person name="Waki K."/>
            <person name="Watahiki A."/>
            <person name="Okamura-Oho Y."/>
            <person name="Suzuki H."/>
            <person name="Kawai J."/>
            <person name="Hayashizaki Y."/>
        </authorList>
    </citation>
    <scope>NUCLEOTIDE SEQUENCE [LARGE SCALE MRNA] OF 71-466</scope>
    <source>
        <tissue>Thymus</tissue>
    </source>
</reference>
<reference key="4">
    <citation type="journal article" date="1995" name="Proc. Natl. Acad. Sci. U.S.A.">
        <title>Cloning and analysis of murine cDNA that encodes a fibrogenic lymphokine, fibrosin.</title>
        <authorList>
            <person name="Prakash S."/>
            <person name="Robbins P.W."/>
            <person name="Wyler D.J."/>
        </authorList>
    </citation>
    <scope>CHARACTERIZATION OF 3'-UTR</scope>
</reference>
<reference key="5">
    <citation type="journal article" date="2010" name="Cell">
        <title>A tissue-specific atlas of mouse protein phosphorylation and expression.</title>
        <authorList>
            <person name="Huttlin E.L."/>
            <person name="Jedrychowski M.P."/>
            <person name="Elias J.E."/>
            <person name="Goswami T."/>
            <person name="Rad R."/>
            <person name="Beausoleil S.A."/>
            <person name="Villen J."/>
            <person name="Haas W."/>
            <person name="Sowa M.E."/>
            <person name="Gygi S.P."/>
        </authorList>
    </citation>
    <scope>IDENTIFICATION BY MASS SPECTROMETRY [LARGE SCALE ANALYSIS]</scope>
    <source>
        <tissue>Testis</tissue>
    </source>
</reference>
<reference key="6">
    <citation type="journal article" date="2014" name="Mol. Cell. Proteomics">
        <title>Immunoaffinity enrichment and mass spectrometry analysis of protein methylation.</title>
        <authorList>
            <person name="Guo A."/>
            <person name="Gu H."/>
            <person name="Zhou J."/>
            <person name="Mulhern D."/>
            <person name="Wang Y."/>
            <person name="Lee K.A."/>
            <person name="Yang V."/>
            <person name="Aguiar M."/>
            <person name="Kornhauser J."/>
            <person name="Jia X."/>
            <person name="Ren J."/>
            <person name="Beausoleil S.A."/>
            <person name="Silva J.C."/>
            <person name="Vemulapalli V."/>
            <person name="Bedford M.T."/>
            <person name="Comb M.J."/>
        </authorList>
    </citation>
    <scope>METHYLATION [LARGE SCALE ANALYSIS] AT ARG-229</scope>
    <scope>IDENTIFICATION BY MASS SPECTROMETRY [LARGE SCALE ANALYSIS]</scope>
    <source>
        <tissue>Embryo</tissue>
    </source>
</reference>